<evidence type="ECO:0000250" key="1"/>
<evidence type="ECO:0000269" key="2">
    <source>
    </source>
</evidence>
<evidence type="ECO:0000269" key="3">
    <source>
    </source>
</evidence>
<evidence type="ECO:0000269" key="4">
    <source ref="4"/>
</evidence>
<evidence type="ECO:0000305" key="5"/>
<evidence type="ECO:0007829" key="6">
    <source>
        <dbReference type="PDB" id="2C0R"/>
    </source>
</evidence>
<proteinExistence type="evidence at protein level"/>
<sequence>MSKRAYNFNAGPAALPLEVLERAQAEFVDYQHTGMSIMEMSHRGAVYEAVHNEAQARLLALLGNPTGYKVLFIQGGASTQFAMIPMNFLKEGQTANYVMTGSWASKALKEAKLIGDTHVAASSEASNYMTLPKLQEIQLQDNAAYLHLTSNETIEGAQFKAFPDTGSVPLIGDMSSDILSRPFDLNQFGLVYAGAQKNLGPSGVTVVIVREDLVAESPKHLPTMLRYDTYVKNNSLYNTPPSFGIYMVNEVLKWIEERGGLEGVQQANRKKASLIYDAIDQSGGFYRGCVDVDSRSDMNITFRLASEELEKEFVKASEQEGFVGLKGHRSVGGLRASIYNAVPYESCEALVQFMEHFKRSRG</sequence>
<accession>Q59196</accession>
<gene>
    <name type="primary">serC</name>
</gene>
<comment type="function">
    <text evidence="2">Catalyzes the reversible conversion of 3-phosphohydroxypyruvate to phosphoserine and of 3-hydroxy-2-oxo-4-phosphonooxybutanoate to phosphohydroxythreonine.</text>
</comment>
<comment type="catalytic activity">
    <reaction evidence="3">
        <text>O-phospho-L-serine + 2-oxoglutarate = 3-phosphooxypyruvate + L-glutamate</text>
        <dbReference type="Rhea" id="RHEA:14329"/>
        <dbReference type="ChEBI" id="CHEBI:16810"/>
        <dbReference type="ChEBI" id="CHEBI:18110"/>
        <dbReference type="ChEBI" id="CHEBI:29985"/>
        <dbReference type="ChEBI" id="CHEBI:57524"/>
        <dbReference type="EC" id="2.6.1.52"/>
    </reaction>
</comment>
<comment type="catalytic activity">
    <reaction evidence="3">
        <text>4-(phosphooxy)-L-threonine + 2-oxoglutarate = (R)-3-hydroxy-2-oxo-4-phosphooxybutanoate + L-glutamate</text>
        <dbReference type="Rhea" id="RHEA:16573"/>
        <dbReference type="ChEBI" id="CHEBI:16810"/>
        <dbReference type="ChEBI" id="CHEBI:29985"/>
        <dbReference type="ChEBI" id="CHEBI:58452"/>
        <dbReference type="ChEBI" id="CHEBI:58538"/>
        <dbReference type="EC" id="2.6.1.52"/>
    </reaction>
</comment>
<comment type="cofactor">
    <cofactor evidence="2 4">
        <name>pyridoxal 5'-phosphate</name>
        <dbReference type="ChEBI" id="CHEBI:597326"/>
    </cofactor>
    <text evidence="2 4">Binds 1 pyridoxal phosphate per subunit.</text>
</comment>
<comment type="biophysicochemical properties">
    <kinetics>
        <KM evidence="2">1 mM for glutamate (at pH 7)</KM>
        <KM evidence="2">0.2 mM for glutamate (at pH 9)</KM>
        <KM evidence="2">0.1 mM for phosphohydroxypyruvate (at pH 7)</KM>
        <KM evidence="2">0.09 mM for phosphohydroxypyruvate (at pH 9)</KM>
        <Vmax evidence="2">6.0 nmol/min/mg enzyme for the reaction forming phosphoserine (at pH 7)</Vmax>
        <Vmax evidence="2">10.0 nmol/min/mg enzyme for the reaction forming phosphoserine (at pH 9)</Vmax>
    </kinetics>
    <phDependence>
        <text evidence="2">Optimum pH is 9.0. At pH 9.5, retains more 60% of its maximum activity. Inactive below pH 6.</text>
    </phDependence>
    <temperatureDependence>
        <text evidence="2">Thermal denaturation midpoint (Tm) is 71 degrees Celsius at pH 6 and is lowered around 58 degrees Celsius at pH 8.5 and 10.</text>
    </temperatureDependence>
</comment>
<comment type="pathway">
    <text>Amino-acid biosynthesis; L-serine biosynthesis; L-serine from 3-phospho-D-glycerate: step 2/3.</text>
</comment>
<comment type="pathway">
    <text>Cofactor biosynthesis; pyridoxine 5'-phosphate biosynthesis; pyridoxine 5'-phosphate from D-erythrose 4-phosphate: step 3/5.</text>
</comment>
<comment type="subunit">
    <text evidence="2 3 4">Homodimer.</text>
</comment>
<comment type="subcellular location">
    <subcellularLocation>
        <location evidence="1">Cytoplasm</location>
    </subcellularLocation>
</comment>
<comment type="miscellaneous">
    <text>Significant conformational rearrangements are involved in response to pH changes.</text>
</comment>
<comment type="similarity">
    <text evidence="5">Belongs to the class-V pyridoxal-phosphate-dependent aminotransferase family. SerC subfamily.</text>
</comment>
<organism>
    <name type="scientific">Niallia circulans</name>
    <name type="common">Bacillus circulans</name>
    <dbReference type="NCBI Taxonomy" id="1397"/>
    <lineage>
        <taxon>Bacteria</taxon>
        <taxon>Bacillati</taxon>
        <taxon>Bacillota</taxon>
        <taxon>Bacilli</taxon>
        <taxon>Bacillales</taxon>
        <taxon>Bacillaceae</taxon>
        <taxon>Niallia</taxon>
    </lineage>
</organism>
<feature type="initiator methionine" description="Removed" evidence="3">
    <location>
        <position position="1"/>
    </location>
</feature>
<feature type="chain" id="PRO_0000150147" description="Phosphoserine aminotransferase">
    <location>
        <begin position="2"/>
        <end position="362"/>
    </location>
</feature>
<feature type="binding site" evidence="1">
    <location>
        <position position="43"/>
    </location>
    <ligand>
        <name>L-glutamate</name>
        <dbReference type="ChEBI" id="CHEBI:29985"/>
    </ligand>
</feature>
<feature type="binding site">
    <location>
        <begin position="77"/>
        <end position="78"/>
    </location>
    <ligand>
        <name>pyridoxal 5'-phosphate</name>
        <dbReference type="ChEBI" id="CHEBI:597326"/>
    </ligand>
</feature>
<feature type="binding site">
    <location>
        <position position="103"/>
    </location>
    <ligand>
        <name>pyridoxal 5'-phosphate</name>
        <dbReference type="ChEBI" id="CHEBI:597326"/>
    </ligand>
</feature>
<feature type="binding site">
    <location>
        <position position="153"/>
    </location>
    <ligand>
        <name>pyridoxal 5'-phosphate</name>
        <dbReference type="ChEBI" id="CHEBI:597326"/>
    </ligand>
</feature>
<feature type="binding site">
    <location>
        <position position="173"/>
    </location>
    <ligand>
        <name>pyridoxal 5'-phosphate</name>
        <dbReference type="ChEBI" id="CHEBI:597326"/>
    </ligand>
</feature>
<feature type="binding site">
    <location>
        <position position="196"/>
    </location>
    <ligand>
        <name>pyridoxal 5'-phosphate</name>
        <dbReference type="ChEBI" id="CHEBI:597326"/>
    </ligand>
</feature>
<feature type="binding site">
    <location>
        <begin position="238"/>
        <end position="239"/>
    </location>
    <ligand>
        <name>pyridoxal 5'-phosphate</name>
        <dbReference type="ChEBI" id="CHEBI:597326"/>
    </ligand>
</feature>
<feature type="modified residue" description="N6-(pyridoxal phosphate)lysine">
    <location>
        <position position="197"/>
    </location>
</feature>
<feature type="strand" evidence="6">
    <location>
        <begin position="10"/>
        <end position="12"/>
    </location>
</feature>
<feature type="helix" evidence="6">
    <location>
        <begin position="17"/>
        <end position="25"/>
    </location>
</feature>
<feature type="strand" evidence="6">
    <location>
        <begin position="27"/>
        <end position="30"/>
    </location>
</feature>
<feature type="strand" evidence="6">
    <location>
        <begin position="33"/>
        <end position="35"/>
    </location>
</feature>
<feature type="helix" evidence="6">
    <location>
        <begin position="37"/>
        <end position="39"/>
    </location>
</feature>
<feature type="helix" evidence="6">
    <location>
        <begin position="45"/>
        <end position="61"/>
    </location>
</feature>
<feature type="strand" evidence="6">
    <location>
        <begin position="66"/>
        <end position="75"/>
    </location>
</feature>
<feature type="helix" evidence="6">
    <location>
        <begin position="76"/>
        <end position="88"/>
    </location>
</feature>
<feature type="strand" evidence="6">
    <location>
        <begin position="94"/>
        <end position="99"/>
    </location>
</feature>
<feature type="helix" evidence="6">
    <location>
        <begin position="102"/>
        <end position="114"/>
    </location>
</feature>
<feature type="strand" evidence="6">
    <location>
        <begin position="117"/>
        <end position="122"/>
    </location>
</feature>
<feature type="helix" evidence="6">
    <location>
        <begin position="124"/>
        <end position="126"/>
    </location>
</feature>
<feature type="helix" evidence="6">
    <location>
        <begin position="134"/>
        <end position="136"/>
    </location>
</feature>
<feature type="strand" evidence="6">
    <location>
        <begin position="143"/>
        <end position="152"/>
    </location>
</feature>
<feature type="turn" evidence="6">
    <location>
        <begin position="153"/>
        <end position="156"/>
    </location>
</feature>
<feature type="strand" evidence="6">
    <location>
        <begin position="170"/>
        <end position="173"/>
    </location>
</feature>
<feature type="turn" evidence="6">
    <location>
        <begin position="175"/>
        <end position="179"/>
    </location>
</feature>
<feature type="helix" evidence="6">
    <location>
        <begin position="185"/>
        <end position="187"/>
    </location>
</feature>
<feature type="strand" evidence="6">
    <location>
        <begin position="189"/>
        <end position="194"/>
    </location>
</feature>
<feature type="turn" evidence="6">
    <location>
        <begin position="195"/>
        <end position="199"/>
    </location>
</feature>
<feature type="strand" evidence="6">
    <location>
        <begin position="205"/>
        <end position="210"/>
    </location>
</feature>
<feature type="helix" evidence="6">
    <location>
        <begin position="211"/>
        <end position="213"/>
    </location>
</feature>
<feature type="strand" evidence="6">
    <location>
        <begin position="214"/>
        <end position="216"/>
    </location>
</feature>
<feature type="helix" evidence="6">
    <location>
        <begin position="223"/>
        <end position="225"/>
    </location>
</feature>
<feature type="helix" evidence="6">
    <location>
        <begin position="227"/>
        <end position="232"/>
    </location>
</feature>
<feature type="turn" evidence="6">
    <location>
        <begin position="233"/>
        <end position="235"/>
    </location>
</feature>
<feature type="helix" evidence="6">
    <location>
        <begin position="242"/>
        <end position="257"/>
    </location>
</feature>
<feature type="helix" evidence="6">
    <location>
        <begin position="260"/>
        <end position="280"/>
    </location>
</feature>
<feature type="strand" evidence="6">
    <location>
        <begin position="285"/>
        <end position="290"/>
    </location>
</feature>
<feature type="helix" evidence="6">
    <location>
        <begin position="292"/>
        <end position="294"/>
    </location>
</feature>
<feature type="strand" evidence="6">
    <location>
        <begin position="297"/>
        <end position="303"/>
    </location>
</feature>
<feature type="helix" evidence="6">
    <location>
        <begin position="307"/>
        <end position="319"/>
    </location>
</feature>
<feature type="strand" evidence="6">
    <location>
        <begin position="322"/>
        <end position="324"/>
    </location>
</feature>
<feature type="turn" evidence="6">
    <location>
        <begin position="329"/>
        <end position="331"/>
    </location>
</feature>
<feature type="strand" evidence="6">
    <location>
        <begin position="333"/>
        <end position="337"/>
    </location>
</feature>
<feature type="helix" evidence="6">
    <location>
        <begin position="344"/>
        <end position="361"/>
    </location>
</feature>
<protein>
    <recommendedName>
        <fullName>Phosphoserine aminotransferase</fullName>
        <ecNumber>2.6.1.52</ecNumber>
    </recommendedName>
    <alternativeName>
        <fullName>Phosphohydroxythreonine aminotransferase</fullName>
        <shortName>PSAT</shortName>
    </alternativeName>
</protein>
<name>SERC_NIACI</name>
<keyword id="KW-0002">3D-structure</keyword>
<keyword id="KW-0028">Amino-acid biosynthesis</keyword>
<keyword id="KW-0032">Aminotransferase</keyword>
<keyword id="KW-0963">Cytoplasm</keyword>
<keyword id="KW-0903">Direct protein sequencing</keyword>
<keyword id="KW-0663">Pyridoxal phosphate</keyword>
<keyword id="KW-0718">Serine biosynthesis</keyword>
<keyword id="KW-0808">Transferase</keyword>
<reference key="1">
    <citation type="book" date="1994" name="Proceedings of 9th meeting on vitamin B6 and carbonyl catalysis">
        <title>Phosphoserine aminotransferase from Bacillus circulans var. alkalophilus: purification, gene cloning and sequencing.</title>
        <editorList>
            <person name="Sannia G."/>
        </editorList>
        <authorList>
            <person name="Battchikova N."/>
            <person name="Holopainen M."/>
            <person name="Himanen J.-P."/>
            <person name="Korpela T."/>
        </authorList>
    </citation>
    <scope>NUCLEOTIDE SEQUENCE [GENOMIC DNA]</scope>
    <source>
        <strain>ATCC 21783 / subsp. Alkalophilus</strain>
    </source>
</reference>
<reference key="2">
    <citation type="journal article" date="1996" name="Biochim. Biophys. Acta">
        <title>Phosphoserine aminotransferase from Bacillus circulans subsp. alkalophilus: purification, gene cloning and sequencing.</title>
        <authorList>
            <person name="Battchikova N."/>
            <person name="Himanen J.-P."/>
            <person name="Ahjolahti M."/>
            <person name="Korpela T."/>
        </authorList>
    </citation>
    <scope>NUCLEOTIDE SEQUENCE [GENOMIC DNA]</scope>
    <scope>PROTEIN SEQUENCE OF 2-20</scope>
    <scope>SUBUNIT</scope>
    <scope>CATALYTIC ACTIVITY</scope>
    <source>
        <strain>ATCC 21783 / subsp. Alkalophilus</strain>
    </source>
</reference>
<reference key="3">
    <citation type="journal article" date="1996" name="Protein Sci.">
        <title>Crystallization and preliminary X-ray analysis of phosphoserine aminotransferase from Bacillus circulans subsp. alkalophilus.</title>
        <authorList>
            <person name="Moser M."/>
            <person name="Mueller R."/>
            <person name="Battchikova N."/>
            <person name="Koivulehto M."/>
            <person name="Korpela T."/>
            <person name="Jansonius J.N."/>
        </authorList>
    </citation>
    <scope>CRYSTALLIZATION</scope>
    <source>
        <strain>ATCC 21783 / subsp. Alkalophilus</strain>
    </source>
</reference>
<reference key="4">
    <citation type="submission" date="1998-09" db="PDB data bank">
        <authorList>
            <person name="Hester G."/>
            <person name="Luong T.N."/>
            <person name="Moser M."/>
            <person name="Jansonius J.N."/>
        </authorList>
    </citation>
    <scope>X-RAY CRYSTALLOGRAPHY (2.3 ANGSTROMS) OF MUTANT GLU-3 IN COMPLEX WITH PLP</scope>
    <scope>COFACTOR</scope>
    <source>
        <strain>ATCC 21783 / subsp. Alkalophilus</strain>
    </source>
</reference>
<reference key="5">
    <citation type="journal article" date="2006" name="Proteins">
        <title>Effect of pH on the structure and stability of Bacillus circulans ssp. alkalophilus phosphoserine aminotransferase: thermodynamic and crystallographic studies.</title>
        <authorList>
            <person name="Kapetaniou E.G."/>
            <person name="Thanassoulas A."/>
            <person name="Dubnovitsky A.P."/>
            <person name="Nounesis G."/>
            <person name="Papageorgiou A.C."/>
        </authorList>
    </citation>
    <scope>X-RAY CRYSTALLOGRAPHY (1.2 ANGSTROMS) OF MUTANT GLU-3 IN COMPLEX WITH PLP</scope>
    <scope>FUNCTION</scope>
    <scope>SUBUNIT</scope>
    <scope>BIOPHYSICOCHEMICAL PROPERTIES</scope>
    <scope>COFACTOR</scope>
    <source>
        <strain>ATCC 21783 / subsp. Alkalophilus</strain>
    </source>
</reference>
<dbReference type="EC" id="2.6.1.52"/>
<dbReference type="EMBL" id="Z46432">
    <property type="protein sequence ID" value="CAA86558.2"/>
    <property type="molecule type" value="Genomic_DNA"/>
</dbReference>
<dbReference type="PIR" id="S71439">
    <property type="entry name" value="S71439"/>
</dbReference>
<dbReference type="PDB" id="1BT4">
    <property type="method" value="X-ray"/>
    <property type="resolution" value="2.30 A"/>
    <property type="chains" value="A=4-362"/>
</dbReference>
<dbReference type="PDB" id="1W3U">
    <property type="method" value="X-ray"/>
    <property type="resolution" value="1.50 A"/>
    <property type="chains" value="A=1-362"/>
</dbReference>
<dbReference type="PDB" id="2C0R">
    <property type="method" value="X-ray"/>
    <property type="resolution" value="1.20 A"/>
    <property type="chains" value="A/B=2-362"/>
</dbReference>
<dbReference type="PDBsum" id="1BT4"/>
<dbReference type="PDBsum" id="1W3U"/>
<dbReference type="PDBsum" id="2C0R"/>
<dbReference type="SMR" id="Q59196"/>
<dbReference type="BRENDA" id="2.6.1.52">
    <property type="organism ID" value="649"/>
</dbReference>
<dbReference type="UniPathway" id="UPA00135">
    <property type="reaction ID" value="UER00197"/>
</dbReference>
<dbReference type="UniPathway" id="UPA00244">
    <property type="reaction ID" value="UER00311"/>
</dbReference>
<dbReference type="EvolutionaryTrace" id="Q59196"/>
<dbReference type="GO" id="GO:0005737">
    <property type="term" value="C:cytoplasm"/>
    <property type="evidence" value="ECO:0007669"/>
    <property type="project" value="UniProtKB-SubCell"/>
</dbReference>
<dbReference type="GO" id="GO:0004648">
    <property type="term" value="F:O-phospho-L-serine:2-oxoglutarate aminotransferase activity"/>
    <property type="evidence" value="ECO:0007669"/>
    <property type="project" value="UniProtKB-UniRule"/>
</dbReference>
<dbReference type="GO" id="GO:0030170">
    <property type="term" value="F:pyridoxal phosphate binding"/>
    <property type="evidence" value="ECO:0007669"/>
    <property type="project" value="UniProtKB-UniRule"/>
</dbReference>
<dbReference type="GO" id="GO:0006564">
    <property type="term" value="P:L-serine biosynthetic process"/>
    <property type="evidence" value="ECO:0007669"/>
    <property type="project" value="UniProtKB-UniRule"/>
</dbReference>
<dbReference type="CDD" id="cd00611">
    <property type="entry name" value="PSAT_like"/>
    <property type="match status" value="1"/>
</dbReference>
<dbReference type="FunFam" id="3.40.640.10:FF:000010">
    <property type="entry name" value="Phosphoserine aminotransferase"/>
    <property type="match status" value="1"/>
</dbReference>
<dbReference type="FunFam" id="3.90.1150.10:FF:000006">
    <property type="entry name" value="Phosphoserine aminotransferase"/>
    <property type="match status" value="1"/>
</dbReference>
<dbReference type="Gene3D" id="3.90.1150.10">
    <property type="entry name" value="Aspartate Aminotransferase, domain 1"/>
    <property type="match status" value="1"/>
</dbReference>
<dbReference type="Gene3D" id="3.40.640.10">
    <property type="entry name" value="Type I PLP-dependent aspartate aminotransferase-like (Major domain)"/>
    <property type="match status" value="1"/>
</dbReference>
<dbReference type="HAMAP" id="MF_00160">
    <property type="entry name" value="SerC_aminotrans_5"/>
    <property type="match status" value="1"/>
</dbReference>
<dbReference type="InterPro" id="IPR000192">
    <property type="entry name" value="Aminotrans_V_dom"/>
</dbReference>
<dbReference type="InterPro" id="IPR020578">
    <property type="entry name" value="Aminotrans_V_PyrdxlP_BS"/>
</dbReference>
<dbReference type="InterPro" id="IPR022278">
    <property type="entry name" value="Pser_aminoTfrase"/>
</dbReference>
<dbReference type="InterPro" id="IPR015424">
    <property type="entry name" value="PyrdxlP-dep_Trfase"/>
</dbReference>
<dbReference type="InterPro" id="IPR015421">
    <property type="entry name" value="PyrdxlP-dep_Trfase_major"/>
</dbReference>
<dbReference type="InterPro" id="IPR015422">
    <property type="entry name" value="PyrdxlP-dep_Trfase_small"/>
</dbReference>
<dbReference type="NCBIfam" id="NF003764">
    <property type="entry name" value="PRK05355.1"/>
    <property type="match status" value="1"/>
</dbReference>
<dbReference type="NCBIfam" id="TIGR01364">
    <property type="entry name" value="serC_1"/>
    <property type="match status" value="1"/>
</dbReference>
<dbReference type="PANTHER" id="PTHR43247">
    <property type="entry name" value="PHOSPHOSERINE AMINOTRANSFERASE"/>
    <property type="match status" value="1"/>
</dbReference>
<dbReference type="PANTHER" id="PTHR43247:SF1">
    <property type="entry name" value="PHOSPHOSERINE AMINOTRANSFERASE"/>
    <property type="match status" value="1"/>
</dbReference>
<dbReference type="Pfam" id="PF00266">
    <property type="entry name" value="Aminotran_5"/>
    <property type="match status" value="1"/>
</dbReference>
<dbReference type="PIRSF" id="PIRSF000525">
    <property type="entry name" value="SerC"/>
    <property type="match status" value="1"/>
</dbReference>
<dbReference type="SUPFAM" id="SSF53383">
    <property type="entry name" value="PLP-dependent transferases"/>
    <property type="match status" value="1"/>
</dbReference>
<dbReference type="PROSITE" id="PS00595">
    <property type="entry name" value="AA_TRANSFER_CLASS_5"/>
    <property type="match status" value="1"/>
</dbReference>